<gene>
    <name evidence="1" type="primary">ligA</name>
    <name type="ordered locus">A1I_06890</name>
</gene>
<protein>
    <recommendedName>
        <fullName evidence="1">DNA ligase</fullName>
        <ecNumber evidence="1">6.5.1.2</ecNumber>
    </recommendedName>
    <alternativeName>
        <fullName evidence="1">Polydeoxyribonucleotide synthase [NAD(+)]</fullName>
    </alternativeName>
</protein>
<organism>
    <name type="scientific">Rickettsia bellii (strain OSU 85-389)</name>
    <dbReference type="NCBI Taxonomy" id="391896"/>
    <lineage>
        <taxon>Bacteria</taxon>
        <taxon>Pseudomonadati</taxon>
        <taxon>Pseudomonadota</taxon>
        <taxon>Alphaproteobacteria</taxon>
        <taxon>Rickettsiales</taxon>
        <taxon>Rickettsiaceae</taxon>
        <taxon>Rickettsieae</taxon>
        <taxon>Rickettsia</taxon>
        <taxon>belli group</taxon>
    </lineage>
</organism>
<comment type="function">
    <text evidence="1">DNA ligase that catalyzes the formation of phosphodiester linkages between 5'-phosphoryl and 3'-hydroxyl groups in double-stranded DNA using NAD as a coenzyme and as the energy source for the reaction. It is essential for DNA replication and repair of damaged DNA.</text>
</comment>
<comment type="catalytic activity">
    <reaction evidence="1">
        <text>NAD(+) + (deoxyribonucleotide)n-3'-hydroxyl + 5'-phospho-(deoxyribonucleotide)m = (deoxyribonucleotide)n+m + AMP + beta-nicotinamide D-nucleotide.</text>
        <dbReference type="EC" id="6.5.1.2"/>
    </reaction>
</comment>
<comment type="cofactor">
    <cofactor evidence="1">
        <name>Mg(2+)</name>
        <dbReference type="ChEBI" id="CHEBI:18420"/>
    </cofactor>
    <cofactor evidence="1">
        <name>Mn(2+)</name>
        <dbReference type="ChEBI" id="CHEBI:29035"/>
    </cofactor>
</comment>
<comment type="similarity">
    <text evidence="1">Belongs to the NAD-dependent DNA ligase family. LigA subfamily.</text>
</comment>
<accession>A8GXT8</accession>
<proteinExistence type="inferred from homology"/>
<dbReference type="EC" id="6.5.1.2" evidence="1"/>
<dbReference type="EMBL" id="CP000849">
    <property type="protein sequence ID" value="ABV79688.1"/>
    <property type="molecule type" value="Genomic_DNA"/>
</dbReference>
<dbReference type="RefSeq" id="WP_012152191.1">
    <property type="nucleotide sequence ID" value="NC_009883.1"/>
</dbReference>
<dbReference type="SMR" id="A8GXT8"/>
<dbReference type="KEGG" id="rbo:A1I_06890"/>
<dbReference type="HOGENOM" id="CLU_007764_2_1_5"/>
<dbReference type="GO" id="GO:0005829">
    <property type="term" value="C:cytosol"/>
    <property type="evidence" value="ECO:0007669"/>
    <property type="project" value="TreeGrafter"/>
</dbReference>
<dbReference type="GO" id="GO:0003911">
    <property type="term" value="F:DNA ligase (NAD+) activity"/>
    <property type="evidence" value="ECO:0007669"/>
    <property type="project" value="UniProtKB-UniRule"/>
</dbReference>
<dbReference type="GO" id="GO:0046872">
    <property type="term" value="F:metal ion binding"/>
    <property type="evidence" value="ECO:0007669"/>
    <property type="project" value="UniProtKB-KW"/>
</dbReference>
<dbReference type="GO" id="GO:0006281">
    <property type="term" value="P:DNA repair"/>
    <property type="evidence" value="ECO:0007669"/>
    <property type="project" value="UniProtKB-KW"/>
</dbReference>
<dbReference type="GO" id="GO:0006260">
    <property type="term" value="P:DNA replication"/>
    <property type="evidence" value="ECO:0007669"/>
    <property type="project" value="UniProtKB-KW"/>
</dbReference>
<dbReference type="CDD" id="cd17748">
    <property type="entry name" value="BRCT_DNA_ligase_like"/>
    <property type="match status" value="1"/>
</dbReference>
<dbReference type="CDD" id="cd00114">
    <property type="entry name" value="LIGANc"/>
    <property type="match status" value="1"/>
</dbReference>
<dbReference type="FunFam" id="1.10.150.20:FF:000007">
    <property type="entry name" value="DNA ligase"/>
    <property type="match status" value="1"/>
</dbReference>
<dbReference type="FunFam" id="2.40.50.140:FF:000012">
    <property type="entry name" value="DNA ligase"/>
    <property type="match status" value="1"/>
</dbReference>
<dbReference type="FunFam" id="3.30.470.30:FF:000001">
    <property type="entry name" value="DNA ligase"/>
    <property type="match status" value="1"/>
</dbReference>
<dbReference type="Gene3D" id="6.20.10.30">
    <property type="match status" value="1"/>
</dbReference>
<dbReference type="Gene3D" id="1.10.150.20">
    <property type="entry name" value="5' to 3' exonuclease, C-terminal subdomain"/>
    <property type="match status" value="2"/>
</dbReference>
<dbReference type="Gene3D" id="3.40.50.10190">
    <property type="entry name" value="BRCT domain"/>
    <property type="match status" value="1"/>
</dbReference>
<dbReference type="Gene3D" id="3.30.470.30">
    <property type="entry name" value="DNA ligase/mRNA capping enzyme"/>
    <property type="match status" value="1"/>
</dbReference>
<dbReference type="Gene3D" id="1.10.287.610">
    <property type="entry name" value="Helix hairpin bin"/>
    <property type="match status" value="1"/>
</dbReference>
<dbReference type="Gene3D" id="2.40.50.140">
    <property type="entry name" value="Nucleic acid-binding proteins"/>
    <property type="match status" value="1"/>
</dbReference>
<dbReference type="HAMAP" id="MF_01588">
    <property type="entry name" value="DNA_ligase_A"/>
    <property type="match status" value="1"/>
</dbReference>
<dbReference type="InterPro" id="IPR001357">
    <property type="entry name" value="BRCT_dom"/>
</dbReference>
<dbReference type="InterPro" id="IPR036420">
    <property type="entry name" value="BRCT_dom_sf"/>
</dbReference>
<dbReference type="InterPro" id="IPR041663">
    <property type="entry name" value="DisA/LigA_HHH"/>
</dbReference>
<dbReference type="InterPro" id="IPR001679">
    <property type="entry name" value="DNA_ligase"/>
</dbReference>
<dbReference type="InterPro" id="IPR018239">
    <property type="entry name" value="DNA_ligase_AS"/>
</dbReference>
<dbReference type="InterPro" id="IPR033136">
    <property type="entry name" value="DNA_ligase_CS"/>
</dbReference>
<dbReference type="InterPro" id="IPR013839">
    <property type="entry name" value="DNAligase_adenylation"/>
</dbReference>
<dbReference type="InterPro" id="IPR013840">
    <property type="entry name" value="DNAligase_N"/>
</dbReference>
<dbReference type="InterPro" id="IPR012340">
    <property type="entry name" value="NA-bd_OB-fold"/>
</dbReference>
<dbReference type="InterPro" id="IPR004150">
    <property type="entry name" value="NAD_DNA_ligase_OB"/>
</dbReference>
<dbReference type="InterPro" id="IPR010994">
    <property type="entry name" value="RuvA_2-like"/>
</dbReference>
<dbReference type="InterPro" id="IPR004149">
    <property type="entry name" value="Znf_DNAligase_C4"/>
</dbReference>
<dbReference type="NCBIfam" id="TIGR00575">
    <property type="entry name" value="dnlj"/>
    <property type="match status" value="1"/>
</dbReference>
<dbReference type="NCBIfam" id="NF005932">
    <property type="entry name" value="PRK07956.1"/>
    <property type="match status" value="1"/>
</dbReference>
<dbReference type="PANTHER" id="PTHR23389">
    <property type="entry name" value="CHROMOSOME TRANSMISSION FIDELITY FACTOR 18"/>
    <property type="match status" value="1"/>
</dbReference>
<dbReference type="PANTHER" id="PTHR23389:SF9">
    <property type="entry name" value="DNA LIGASE"/>
    <property type="match status" value="1"/>
</dbReference>
<dbReference type="Pfam" id="PF00533">
    <property type="entry name" value="BRCT"/>
    <property type="match status" value="1"/>
</dbReference>
<dbReference type="Pfam" id="PF01653">
    <property type="entry name" value="DNA_ligase_aden"/>
    <property type="match status" value="1"/>
</dbReference>
<dbReference type="Pfam" id="PF03120">
    <property type="entry name" value="DNA_ligase_OB"/>
    <property type="match status" value="1"/>
</dbReference>
<dbReference type="Pfam" id="PF03119">
    <property type="entry name" value="DNA_ligase_ZBD"/>
    <property type="match status" value="1"/>
</dbReference>
<dbReference type="Pfam" id="PF12826">
    <property type="entry name" value="HHH_2"/>
    <property type="match status" value="1"/>
</dbReference>
<dbReference type="PIRSF" id="PIRSF001604">
    <property type="entry name" value="LigA"/>
    <property type="match status" value="1"/>
</dbReference>
<dbReference type="SMART" id="SM00292">
    <property type="entry name" value="BRCT"/>
    <property type="match status" value="1"/>
</dbReference>
<dbReference type="SMART" id="SM00532">
    <property type="entry name" value="LIGANc"/>
    <property type="match status" value="1"/>
</dbReference>
<dbReference type="SUPFAM" id="SSF52113">
    <property type="entry name" value="BRCT domain"/>
    <property type="match status" value="1"/>
</dbReference>
<dbReference type="SUPFAM" id="SSF56091">
    <property type="entry name" value="DNA ligase/mRNA capping enzyme, catalytic domain"/>
    <property type="match status" value="1"/>
</dbReference>
<dbReference type="SUPFAM" id="SSF50249">
    <property type="entry name" value="Nucleic acid-binding proteins"/>
    <property type="match status" value="1"/>
</dbReference>
<dbReference type="SUPFAM" id="SSF47781">
    <property type="entry name" value="RuvA domain 2-like"/>
    <property type="match status" value="1"/>
</dbReference>
<dbReference type="PROSITE" id="PS50172">
    <property type="entry name" value="BRCT"/>
    <property type="match status" value="1"/>
</dbReference>
<dbReference type="PROSITE" id="PS01055">
    <property type="entry name" value="DNA_LIGASE_N1"/>
    <property type="match status" value="1"/>
</dbReference>
<dbReference type="PROSITE" id="PS01056">
    <property type="entry name" value="DNA_LIGASE_N2"/>
    <property type="match status" value="1"/>
</dbReference>
<keyword id="KW-0227">DNA damage</keyword>
<keyword id="KW-0234">DNA repair</keyword>
<keyword id="KW-0235">DNA replication</keyword>
<keyword id="KW-0436">Ligase</keyword>
<keyword id="KW-0460">Magnesium</keyword>
<keyword id="KW-0464">Manganese</keyword>
<keyword id="KW-0479">Metal-binding</keyword>
<keyword id="KW-0520">NAD</keyword>
<keyword id="KW-0862">Zinc</keyword>
<sequence>MQNIEKINEEEAKKLLIELADKIAQYNHAYYIEDKPLVSDAEYDQLFNTNLKLEQKFPHLILENSPSKKIGAKVENKFAKVTHQVPMLSLSNVFDEEDVKDFLDRIKSFLRLDQFSPIFCEPKIDGLSFAATYKNGILTTGATRGDGYIGEDITANIKTIKDFPHKINNAPELLEVRGEIYIEKNDFTSLNQEQEQQGKDKFANPRNAAAGSLRQLDPSVTAKRPLKYFVYAIGSAKEELANSQDQLLAKFKELGFNVNEIGKLANSEEEIFSFYEYLKTNRKNLPYEIDGVVYKLNDFALQDRMGFIARSPRFATAHKFPAIIGQTKLLSITVQVGRTGTLTPVAELEPIEIGGVIVSRATLHNYQEIARKDVRVGDYVFLQRAGDVIPQITGVDLAKRSADATTFDPPLFCPSCNSKLHYVPEDIIIRCDNGLNCPAQNYERIRHFVSKNAMDIEGLGRKQVEFLIDKGLISNPYDIFFLKEKNEASLTKLENMDGWGKKSVENLFNNIEKSKNVSLPRFIYALGIRHIGEQNVKLLAREFGSYENFIAQMELLKENDPEIYQKLNNLDGIGDKMLVDIIDFFDVKENIELIKNLSEVLNIEDYKETREQSSLTGKIVVFTGSMPTLSRAEAKATAEKLGAKVAASVSSNTDLVIAGEDAGSKLKKAKELGIKIIDEAEWLTLVRDI</sequence>
<reference key="1">
    <citation type="submission" date="2007-09" db="EMBL/GenBank/DDBJ databases">
        <title>Complete genome sequencing of Rickettsia bellii.</title>
        <authorList>
            <person name="Madan A."/>
            <person name="Lee H."/>
            <person name="Madan A."/>
            <person name="Yoon J.-G."/>
            <person name="Ryu G.-Y."/>
            <person name="Dasch G."/>
            <person name="Ereemeva M."/>
        </authorList>
    </citation>
    <scope>NUCLEOTIDE SEQUENCE [LARGE SCALE GENOMIC DNA]</scope>
    <source>
        <strain>OSU 85-389</strain>
    </source>
</reference>
<evidence type="ECO:0000255" key="1">
    <source>
        <dbReference type="HAMAP-Rule" id="MF_01588"/>
    </source>
</evidence>
<feature type="chain" id="PRO_0000313407" description="DNA ligase">
    <location>
        <begin position="1"/>
        <end position="689"/>
    </location>
</feature>
<feature type="domain" description="BRCT" evidence="1">
    <location>
        <begin position="610"/>
        <end position="689"/>
    </location>
</feature>
<feature type="active site" description="N6-AMP-lysine intermediate" evidence="1">
    <location>
        <position position="123"/>
    </location>
</feature>
<feature type="binding site" evidence="1">
    <location>
        <begin position="40"/>
        <end position="44"/>
    </location>
    <ligand>
        <name>NAD(+)</name>
        <dbReference type="ChEBI" id="CHEBI:57540"/>
    </ligand>
</feature>
<feature type="binding site" evidence="1">
    <location>
        <begin position="89"/>
        <end position="90"/>
    </location>
    <ligand>
        <name>NAD(+)</name>
        <dbReference type="ChEBI" id="CHEBI:57540"/>
    </ligand>
</feature>
<feature type="binding site" evidence="1">
    <location>
        <position position="121"/>
    </location>
    <ligand>
        <name>NAD(+)</name>
        <dbReference type="ChEBI" id="CHEBI:57540"/>
    </ligand>
</feature>
<feature type="binding site" evidence="1">
    <location>
        <position position="144"/>
    </location>
    <ligand>
        <name>NAD(+)</name>
        <dbReference type="ChEBI" id="CHEBI:57540"/>
    </ligand>
</feature>
<feature type="binding site" evidence="1">
    <location>
        <position position="179"/>
    </location>
    <ligand>
        <name>NAD(+)</name>
        <dbReference type="ChEBI" id="CHEBI:57540"/>
    </ligand>
</feature>
<feature type="binding site" evidence="1">
    <location>
        <position position="295"/>
    </location>
    <ligand>
        <name>NAD(+)</name>
        <dbReference type="ChEBI" id="CHEBI:57540"/>
    </ligand>
</feature>
<feature type="binding site" evidence="1">
    <location>
        <position position="319"/>
    </location>
    <ligand>
        <name>NAD(+)</name>
        <dbReference type="ChEBI" id="CHEBI:57540"/>
    </ligand>
</feature>
<feature type="binding site" evidence="1">
    <location>
        <position position="413"/>
    </location>
    <ligand>
        <name>Zn(2+)</name>
        <dbReference type="ChEBI" id="CHEBI:29105"/>
    </ligand>
</feature>
<feature type="binding site" evidence="1">
    <location>
        <position position="416"/>
    </location>
    <ligand>
        <name>Zn(2+)</name>
        <dbReference type="ChEBI" id="CHEBI:29105"/>
    </ligand>
</feature>
<feature type="binding site" evidence="1">
    <location>
        <position position="431"/>
    </location>
    <ligand>
        <name>Zn(2+)</name>
        <dbReference type="ChEBI" id="CHEBI:29105"/>
    </ligand>
</feature>
<feature type="binding site" evidence="1">
    <location>
        <position position="437"/>
    </location>
    <ligand>
        <name>Zn(2+)</name>
        <dbReference type="ChEBI" id="CHEBI:29105"/>
    </ligand>
</feature>
<name>DNLJ_RICB8</name>